<comment type="function">
    <text evidence="1">Presumably involved in the export of the biofilm adhesin polysaccharide poly-beta-1,6-N-acetyl-D-glucosamine (PNAG, also referred to as PIA) across the cell membrane.</text>
</comment>
<comment type="subcellular location">
    <subcellularLocation>
        <location evidence="3">Cell membrane</location>
        <topology evidence="3">Multi-pass membrane protein</topology>
    </subcellularLocation>
</comment>
<comment type="similarity">
    <text evidence="3">Belongs to the acyltransferase 3 family.</text>
</comment>
<proteinExistence type="inferred from homology"/>
<gene>
    <name type="primary">icaC</name>
    <name type="ordered locus">SAV2669</name>
</gene>
<sequence length="350" mass="41326">MKKIRLELVYLRAIICAIIIITHLLTQITLKHENMEGGSLVLQFYIRNIVIFGTPCFIILSQLLTTLNYQKVTYRYLTTRVKYILIPYILMGLFYSYSESLLTDSSFNKQFIENVLLGQWYGYFIVVIMQFFILSYIIFKINYNLFNSKILLLLSFILQQSFLYYFTNNTAFHDTVLHYYPLSENTIIFGWIFYFFLGAYMGYNYERVLNFLERYLVIMIVLAVATYFVFIALANGDYWNVTSFSYSLTPYNSIMFIVILGICTHFKTILFNTIQMISAFSFFIYLLHPIILDSLFAYTNIFEDNTMVFLAISLLFILGLCIGVGMILREFYIFRFIIGKQPYKLNINAY</sequence>
<reference key="1">
    <citation type="journal article" date="2001" name="Lancet">
        <title>Whole genome sequencing of meticillin-resistant Staphylococcus aureus.</title>
        <authorList>
            <person name="Kuroda M."/>
            <person name="Ohta T."/>
            <person name="Uchiyama I."/>
            <person name="Baba T."/>
            <person name="Yuzawa H."/>
            <person name="Kobayashi I."/>
            <person name="Cui L."/>
            <person name="Oguchi A."/>
            <person name="Aoki K."/>
            <person name="Nagai Y."/>
            <person name="Lian J.-Q."/>
            <person name="Ito T."/>
            <person name="Kanamori M."/>
            <person name="Matsumaru H."/>
            <person name="Maruyama A."/>
            <person name="Murakami H."/>
            <person name="Hosoyama A."/>
            <person name="Mizutani-Ui Y."/>
            <person name="Takahashi N.K."/>
            <person name="Sawano T."/>
            <person name="Inoue R."/>
            <person name="Kaito C."/>
            <person name="Sekimizu K."/>
            <person name="Hirakawa H."/>
            <person name="Kuhara S."/>
            <person name="Goto S."/>
            <person name="Yabuzaki J."/>
            <person name="Kanehisa M."/>
            <person name="Yamashita A."/>
            <person name="Oshima K."/>
            <person name="Furuya K."/>
            <person name="Yoshino C."/>
            <person name="Shiba T."/>
            <person name="Hattori M."/>
            <person name="Ogasawara N."/>
            <person name="Hayashi H."/>
            <person name="Hiramatsu K."/>
        </authorList>
    </citation>
    <scope>NUCLEOTIDE SEQUENCE [LARGE SCALE GENOMIC DNA]</scope>
    <source>
        <strain>Mu50 / ATCC 700699</strain>
    </source>
</reference>
<evidence type="ECO:0000250" key="1"/>
<evidence type="ECO:0000255" key="2"/>
<evidence type="ECO:0000305" key="3"/>
<accession>Q931E4</accession>
<organism>
    <name type="scientific">Staphylococcus aureus (strain Mu50 / ATCC 700699)</name>
    <dbReference type="NCBI Taxonomy" id="158878"/>
    <lineage>
        <taxon>Bacteria</taxon>
        <taxon>Bacillati</taxon>
        <taxon>Bacillota</taxon>
        <taxon>Bacilli</taxon>
        <taxon>Bacillales</taxon>
        <taxon>Staphylococcaceae</taxon>
        <taxon>Staphylococcus</taxon>
    </lineage>
</organism>
<keyword id="KW-1003">Cell membrane</keyword>
<keyword id="KW-0472">Membrane</keyword>
<keyword id="KW-0812">Transmembrane</keyword>
<keyword id="KW-1133">Transmembrane helix</keyword>
<keyword id="KW-0813">Transport</keyword>
<feature type="chain" id="PRO_0000208072" description="Probable poly-beta-1,6-N-acetyl-D-glucosamine export protein">
    <location>
        <begin position="1"/>
        <end position="350"/>
    </location>
</feature>
<feature type="transmembrane region" description="Helical" evidence="2">
    <location>
        <begin position="7"/>
        <end position="29"/>
    </location>
</feature>
<feature type="transmembrane region" description="Helical" evidence="2">
    <location>
        <begin position="44"/>
        <end position="66"/>
    </location>
</feature>
<feature type="transmembrane region" description="Helical" evidence="2">
    <location>
        <begin position="79"/>
        <end position="101"/>
    </location>
</feature>
<feature type="transmembrane region" description="Helical" evidence="2">
    <location>
        <begin position="116"/>
        <end position="138"/>
    </location>
</feature>
<feature type="transmembrane region" description="Helical" evidence="2">
    <location>
        <begin position="145"/>
        <end position="167"/>
    </location>
</feature>
<feature type="transmembrane region" description="Helical" evidence="2">
    <location>
        <begin position="187"/>
        <end position="204"/>
    </location>
</feature>
<feature type="transmembrane region" description="Helical" evidence="2">
    <location>
        <begin position="211"/>
        <end position="233"/>
    </location>
</feature>
<feature type="transmembrane region" description="Helical" evidence="2">
    <location>
        <begin position="243"/>
        <end position="262"/>
    </location>
</feature>
<feature type="transmembrane region" description="Helical" evidence="2">
    <location>
        <begin position="269"/>
        <end position="291"/>
    </location>
</feature>
<feature type="transmembrane region" description="Helical" evidence="2">
    <location>
        <begin position="306"/>
        <end position="328"/>
    </location>
</feature>
<protein>
    <recommendedName>
        <fullName>Probable poly-beta-1,6-N-acetyl-D-glucosamine export protein</fullName>
        <shortName>PGA export protein</shortName>
        <shortName>Poly-beta-1,6-GlcNAc export protein</shortName>
    </recommendedName>
    <alternativeName>
        <fullName>Biofilm polysaccharide intercellular adhesin export protein</fullName>
        <shortName>Biofilm PIA export protein</shortName>
    </alternativeName>
    <alternativeName>
        <fullName>Intercellular adhesion protein C</fullName>
    </alternativeName>
</protein>
<dbReference type="EMBL" id="BA000017">
    <property type="protein sequence ID" value="BAB58831.1"/>
    <property type="molecule type" value="Genomic_DNA"/>
</dbReference>
<dbReference type="RefSeq" id="WP_000723833.1">
    <property type="nucleotide sequence ID" value="NC_002758.2"/>
</dbReference>
<dbReference type="KEGG" id="sav:SAV2669"/>
<dbReference type="HOGENOM" id="CLU_064947_1_0_9"/>
<dbReference type="Proteomes" id="UP000002481">
    <property type="component" value="Chromosome"/>
</dbReference>
<dbReference type="GO" id="GO:0005886">
    <property type="term" value="C:plasma membrane"/>
    <property type="evidence" value="ECO:0007669"/>
    <property type="project" value="UniProtKB-SubCell"/>
</dbReference>
<dbReference type="GO" id="GO:0016413">
    <property type="term" value="F:O-acetyltransferase activity"/>
    <property type="evidence" value="ECO:0007669"/>
    <property type="project" value="TreeGrafter"/>
</dbReference>
<dbReference type="GO" id="GO:0009246">
    <property type="term" value="P:enterobacterial common antigen biosynthetic process"/>
    <property type="evidence" value="ECO:0007669"/>
    <property type="project" value="TreeGrafter"/>
</dbReference>
<dbReference type="InterPro" id="IPR002656">
    <property type="entry name" value="Acyl_transf_3_dom"/>
</dbReference>
<dbReference type="PANTHER" id="PTHR40074">
    <property type="entry name" value="O-ACETYLTRANSFERASE WECH"/>
    <property type="match status" value="1"/>
</dbReference>
<dbReference type="PANTHER" id="PTHR40074:SF2">
    <property type="entry name" value="O-ACETYLTRANSFERASE WECH"/>
    <property type="match status" value="1"/>
</dbReference>
<dbReference type="Pfam" id="PF01757">
    <property type="entry name" value="Acyl_transf_3"/>
    <property type="match status" value="1"/>
</dbReference>
<name>ICAC_STAAM</name>